<keyword id="KW-0044">Antibiotic</keyword>
<keyword id="KW-0929">Antimicrobial</keyword>
<keyword id="KW-0211">Defensin</keyword>
<keyword id="KW-1015">Disulfide bond</keyword>
<keyword id="KW-0964">Secreted</keyword>
<keyword id="KW-0732">Signal</keyword>
<gene>
    <name type="primary">DEFB128</name>
</gene>
<accession>A4H253</accession>
<name>DB128_PONPY</name>
<feature type="signal peptide" evidence="2">
    <location>
        <begin position="1"/>
        <end position="18"/>
    </location>
</feature>
<feature type="chain" id="PRO_0000289853" description="Beta-defensin 128">
    <location>
        <begin position="19"/>
        <end position="93"/>
    </location>
</feature>
<feature type="disulfide bond" evidence="1">
    <location>
        <begin position="24"/>
        <end position="52"/>
    </location>
</feature>
<feature type="disulfide bond" evidence="1">
    <location>
        <begin position="32"/>
        <end position="46"/>
    </location>
</feature>
<feature type="disulfide bond" evidence="1">
    <location>
        <begin position="36"/>
        <end position="53"/>
    </location>
</feature>
<evidence type="ECO:0000250" key="1"/>
<evidence type="ECO:0000255" key="2"/>
<evidence type="ECO:0000305" key="3"/>
<reference key="1">
    <citation type="submission" date="2006-11" db="EMBL/GenBank/DDBJ databases">
        <title>Evolution and sequence variation of human beta-defensin genes.</title>
        <authorList>
            <person name="Hollox E.J."/>
            <person name="Armour J.A.L."/>
        </authorList>
    </citation>
    <scope>NUCLEOTIDE SEQUENCE [GENOMIC DNA]</scope>
</reference>
<protein>
    <recommendedName>
        <fullName>Beta-defensin 128</fullName>
    </recommendedName>
    <alternativeName>
        <fullName>Defensin, beta 128</fullName>
    </alternativeName>
</protein>
<sequence>MKLFLVLIILLFEVLTDGARLKKCFNNVTGYCRKKCKVGERYEIGCLSGKLCCINYEEEKEHVSFKKPHQHSGEKLSVQQDYIILPTVTIFTV</sequence>
<comment type="function">
    <text evidence="3">Has antibacterial activity.</text>
</comment>
<comment type="subcellular location">
    <subcellularLocation>
        <location evidence="3">Secreted</location>
    </subcellularLocation>
</comment>
<comment type="similarity">
    <text evidence="3">Belongs to the beta-defensin family.</text>
</comment>
<proteinExistence type="inferred from homology"/>
<organism>
    <name type="scientific">Pongo pygmaeus</name>
    <name type="common">Bornean orangutan</name>
    <dbReference type="NCBI Taxonomy" id="9600"/>
    <lineage>
        <taxon>Eukaryota</taxon>
        <taxon>Metazoa</taxon>
        <taxon>Chordata</taxon>
        <taxon>Craniata</taxon>
        <taxon>Vertebrata</taxon>
        <taxon>Euteleostomi</taxon>
        <taxon>Mammalia</taxon>
        <taxon>Eutheria</taxon>
        <taxon>Euarchontoglires</taxon>
        <taxon>Primates</taxon>
        <taxon>Haplorrhini</taxon>
        <taxon>Catarrhini</taxon>
        <taxon>Hominidae</taxon>
        <taxon>Pongo</taxon>
    </lineage>
</organism>
<dbReference type="EMBL" id="AM410158">
    <property type="protein sequence ID" value="CAL68968.1"/>
    <property type="molecule type" value="Genomic_DNA"/>
</dbReference>
<dbReference type="RefSeq" id="XP_054322830.1">
    <property type="nucleotide sequence ID" value="XM_054466855.2"/>
</dbReference>
<dbReference type="SMR" id="A4H253"/>
<dbReference type="GeneID" id="129021454"/>
<dbReference type="GO" id="GO:0005576">
    <property type="term" value="C:extracellular region"/>
    <property type="evidence" value="ECO:0007669"/>
    <property type="project" value="UniProtKB-SubCell"/>
</dbReference>
<dbReference type="GO" id="GO:0050829">
    <property type="term" value="P:defense response to Gram-negative bacterium"/>
    <property type="evidence" value="ECO:0007669"/>
    <property type="project" value="UniProtKB-ARBA"/>
</dbReference>
<dbReference type="GO" id="GO:0045087">
    <property type="term" value="P:innate immune response"/>
    <property type="evidence" value="ECO:0007669"/>
    <property type="project" value="InterPro"/>
</dbReference>
<dbReference type="InterPro" id="IPR050544">
    <property type="entry name" value="Beta-defensin"/>
</dbReference>
<dbReference type="InterPro" id="IPR025933">
    <property type="entry name" value="Beta_defensin_dom"/>
</dbReference>
<dbReference type="PANTHER" id="PTHR15001:SF3">
    <property type="entry name" value="BETA-DEFENSIN 123"/>
    <property type="match status" value="1"/>
</dbReference>
<dbReference type="PANTHER" id="PTHR15001">
    <property type="entry name" value="BETA-DEFENSIN 123-RELATED"/>
    <property type="match status" value="1"/>
</dbReference>
<dbReference type="Pfam" id="PF13841">
    <property type="entry name" value="Defensin_beta_2"/>
    <property type="match status" value="1"/>
</dbReference>